<keyword id="KW-0997">Cell inner membrane</keyword>
<keyword id="KW-1003">Cell membrane</keyword>
<keyword id="KW-0472">Membrane</keyword>
<keyword id="KW-1185">Reference proteome</keyword>
<keyword id="KW-0346">Stress response</keyword>
<keyword id="KW-0812">Transmembrane</keyword>
<keyword id="KW-1133">Transmembrane helix</keyword>
<accession>A5A615</accession>
<dbReference type="EMBL" id="U00096">
    <property type="protein sequence ID" value="ABP93444.1"/>
    <property type="molecule type" value="Genomic_DNA"/>
</dbReference>
<dbReference type="EMBL" id="AP009048">
    <property type="status" value="NOT_ANNOTATED_CDS"/>
    <property type="molecule type" value="Genomic_DNA"/>
</dbReference>
<dbReference type="RefSeq" id="WP_001310798.1">
    <property type="nucleotide sequence ID" value="NZ_SSZK01000021.1"/>
</dbReference>
<dbReference type="RefSeq" id="YP_001165318.1">
    <property type="nucleotide sequence ID" value="NC_000913.3"/>
</dbReference>
<dbReference type="SMR" id="A5A615"/>
<dbReference type="STRING" id="511145.b4598"/>
<dbReference type="PaxDb" id="511145-b4598"/>
<dbReference type="EnsemblBacteria" id="ABP93444">
    <property type="protein sequence ID" value="ABP93444"/>
    <property type="gene ID" value="b4598"/>
</dbReference>
<dbReference type="GeneID" id="5061503"/>
<dbReference type="KEGG" id="eco:b4598"/>
<dbReference type="PATRIC" id="fig|83333.113.peg.1478"/>
<dbReference type="InParanoid" id="A5A615"/>
<dbReference type="OrthoDB" id="6572485at2"/>
<dbReference type="BioCyc" id="EcoCyc:MONOMER0-761"/>
<dbReference type="PRO" id="PR:A5A615"/>
<dbReference type="Proteomes" id="UP000000625">
    <property type="component" value="Chromosome"/>
</dbReference>
<dbReference type="GO" id="GO:0005886">
    <property type="term" value="C:plasma membrane"/>
    <property type="evidence" value="ECO:0000314"/>
    <property type="project" value="EcoCyc"/>
</dbReference>
<dbReference type="InterPro" id="IPR049611">
    <property type="entry name" value="YncL"/>
</dbReference>
<dbReference type="NCBIfam" id="NF000537">
    <property type="entry name" value="YncL"/>
    <property type="match status" value="1"/>
</dbReference>
<sequence length="31" mass="3538">MNVSSRTVVLINFFAAVGLFTLISMRFGWFI</sequence>
<gene>
    <name type="primary">yncL</name>
    <name type="ordered locus">b4598</name>
    <name type="ordered locus">JW1439.1</name>
</gene>
<feature type="chain" id="PRO_0000311787" description="Uncharacterized protein YncL">
    <location>
        <begin position="1"/>
        <end position="31"/>
    </location>
</feature>
<feature type="transmembrane region" description="Helical" evidence="1">
    <location>
        <begin position="7"/>
        <end position="29"/>
    </location>
</feature>
<comment type="subcellular location">
    <subcellularLocation>
        <location evidence="5 6">Cell inner membrane</location>
        <topology evidence="2 4">Single-pass membrane protein</topology>
    </subcellularLocation>
</comment>
<comment type="induction">
    <text evidence="2 3">Expressed during stationary phase (PubMed:19121005), in minimal glucose or glycerol medium and at 45 degrees Celsius (PubMed:19734316) (at protein level).</text>
</comment>
<proteinExistence type="evidence at protein level"/>
<protein>
    <recommendedName>
        <fullName>Uncharacterized protein YncL</fullName>
    </recommendedName>
</protein>
<reference key="1">
    <citation type="journal article" date="1997" name="Science">
        <title>The complete genome sequence of Escherichia coli K-12.</title>
        <authorList>
            <person name="Blattner F.R."/>
            <person name="Plunkett G. III"/>
            <person name="Bloch C.A."/>
            <person name="Perna N.T."/>
            <person name="Burland V."/>
            <person name="Riley M."/>
            <person name="Collado-Vides J."/>
            <person name="Glasner J.D."/>
            <person name="Rode C.K."/>
            <person name="Mayhew G.F."/>
            <person name="Gregor J."/>
            <person name="Davis N.W."/>
            <person name="Kirkpatrick H.A."/>
            <person name="Goeden M.A."/>
            <person name="Rose D.J."/>
            <person name="Mau B."/>
            <person name="Shao Y."/>
        </authorList>
    </citation>
    <scope>NUCLEOTIDE SEQUENCE [LARGE SCALE GENOMIC DNA]</scope>
    <source>
        <strain>K12 / MG1655 / ATCC 47076</strain>
    </source>
</reference>
<reference key="2">
    <citation type="journal article" date="2006" name="Mol. Syst. Biol.">
        <title>Highly accurate genome sequences of Escherichia coli K-12 strains MG1655 and W3110.</title>
        <authorList>
            <person name="Hayashi K."/>
            <person name="Morooka N."/>
            <person name="Yamamoto Y."/>
            <person name="Fujita K."/>
            <person name="Isono K."/>
            <person name="Choi S."/>
            <person name="Ohtsubo E."/>
            <person name="Baba T."/>
            <person name="Wanner B.L."/>
            <person name="Mori H."/>
            <person name="Horiuchi T."/>
        </authorList>
    </citation>
    <scope>NUCLEOTIDE SEQUENCE [LARGE SCALE GENOMIC DNA]</scope>
    <source>
        <strain>K12 / W3110 / ATCC 27325 / DSM 5911</strain>
    </source>
</reference>
<reference key="3">
    <citation type="journal article" date="2008" name="Mol. Microbiol.">
        <title>Small membrane proteins found by comparative genomics and ribosome binding site models.</title>
        <authorList>
            <person name="Hemm M.R."/>
            <person name="Paul B.J."/>
            <person name="Schneider T.D."/>
            <person name="Storz G."/>
            <person name="Rudd K.E."/>
        </authorList>
    </citation>
    <scope>IDENTIFICATION</scope>
    <scope>SUBCELLULAR LOCATION</scope>
    <scope>INDUCTION</scope>
    <source>
        <strain>K12 / MG1655 / ATCC 47076</strain>
    </source>
</reference>
<reference key="4">
    <citation type="journal article" date="2010" name="J. Bacteriol.">
        <title>Small stress response proteins in Escherichia coli: proteins missed by classical proteomic studies.</title>
        <authorList>
            <person name="Hemm M.R."/>
            <person name="Paul B.J."/>
            <person name="Miranda-Rios J."/>
            <person name="Zhang A."/>
            <person name="Soltanzad N."/>
            <person name="Storz G."/>
        </authorList>
    </citation>
    <scope>INDUCTION</scope>
    <source>
        <strain>K12 / MG1655 / ATCC 47076</strain>
    </source>
</reference>
<reference key="5">
    <citation type="journal article" date="2011" name="J. Biol. Chem.">
        <title>Membrane localization of small proteins in Escherichia coli.</title>
        <authorList>
            <person name="Fontaine F."/>
            <person name="Fuchs R.T."/>
            <person name="Storz G."/>
        </authorList>
    </citation>
    <scope>SUBCELLULAR LOCATION</scope>
    <source>
        <strain>K12 / MG1655 / ATCC 47076</strain>
    </source>
</reference>
<name>YNCL_ECOLI</name>
<organism>
    <name type="scientific">Escherichia coli (strain K12)</name>
    <dbReference type="NCBI Taxonomy" id="83333"/>
    <lineage>
        <taxon>Bacteria</taxon>
        <taxon>Pseudomonadati</taxon>
        <taxon>Pseudomonadota</taxon>
        <taxon>Gammaproteobacteria</taxon>
        <taxon>Enterobacterales</taxon>
        <taxon>Enterobacteriaceae</taxon>
        <taxon>Escherichia</taxon>
    </lineage>
</organism>
<evidence type="ECO:0000255" key="1"/>
<evidence type="ECO:0000269" key="2">
    <source>
    </source>
</evidence>
<evidence type="ECO:0000269" key="3">
    <source>
    </source>
</evidence>
<evidence type="ECO:0000269" key="4">
    <source>
    </source>
</evidence>
<evidence type="ECO:0000305" key="5">
    <source>
    </source>
</evidence>
<evidence type="ECO:0000305" key="6">
    <source>
    </source>
</evidence>